<dbReference type="GO" id="GO:0050832">
    <property type="term" value="P:defense response to fungus"/>
    <property type="evidence" value="ECO:0000314"/>
    <property type="project" value="UniProtKB"/>
</dbReference>
<dbReference type="GO" id="GO:0031640">
    <property type="term" value="P:killing of cells of another organism"/>
    <property type="evidence" value="ECO:0007669"/>
    <property type="project" value="UniProtKB-KW"/>
</dbReference>
<accession>C0HM10</accession>
<feature type="chain" id="PRO_0000455338" description="Antifungal protein Lap">
    <location>
        <begin position="1"/>
        <end position="30"/>
    </location>
</feature>
<feature type="non-terminal residue" evidence="2">
    <location>
        <position position="30"/>
    </location>
</feature>
<proteinExistence type="evidence at protein level"/>
<comment type="function">
    <text evidence="1">Displays antifungal activity against M.arachidicola and P.piricola, but not against R.solani, C.gossypii and C.comatus (PubMed:11556814). Inhibits mycelial growth in P.piricola with an IC(50) of 70 nM (PubMed:11556814). Displays very low cell-free translation inhibitory activity in a rabbit reticulocyte lysate system (IC(50)=70 uM) but is able to inhibit HIV-1 reverse transcriptase activity (IC(50)=5.2 nM) (PubMed:11556814).</text>
</comment>
<evidence type="ECO:0000269" key="1">
    <source>
    </source>
</evidence>
<evidence type="ECO:0000303" key="2">
    <source>
    </source>
</evidence>
<evidence type="ECO:0000305" key="3"/>
<reference evidence="3" key="1">
    <citation type="journal article" date="2001" name="Arch. Biochem. Biophys.">
        <title>First simultaneous isolation of a ribosome inactivating protein and an antifungal protein from a mushroom (Lyophyllum shimeji) together with evidence for synergism of their antifungal effects.</title>
        <authorList>
            <person name="Lam S.K."/>
            <person name="Ng T.B."/>
        </authorList>
    </citation>
    <scope>PROTEIN SEQUENCE</scope>
    <scope>FUNCTION</scope>
    <source>
        <tissue evidence="2">Fruiting body</tissue>
    </source>
</reference>
<sequence>AGTEIVTCYNAGTKVPRGPSAXGGAIDFFN</sequence>
<name>AFLAP_LYOSH</name>
<protein>
    <recommendedName>
        <fullName evidence="2">Antifungal protein Lap</fullName>
    </recommendedName>
</protein>
<organism evidence="2">
    <name type="scientific">Lyophyllum shimeji</name>
    <name type="common">Hon-shimeji</name>
    <name type="synonym">Tricholoma shimeji</name>
    <dbReference type="NCBI Taxonomy" id="47721"/>
    <lineage>
        <taxon>Eukaryota</taxon>
        <taxon>Fungi</taxon>
        <taxon>Dikarya</taxon>
        <taxon>Basidiomycota</taxon>
        <taxon>Agaricomycotina</taxon>
        <taxon>Agaricomycetes</taxon>
        <taxon>Agaricomycetidae</taxon>
        <taxon>Agaricales</taxon>
        <taxon>Tricholomatineae</taxon>
        <taxon>Lyophyllaceae</taxon>
        <taxon>Lyophyllum</taxon>
    </lineage>
</organism>
<keyword id="KW-0929">Antimicrobial</keyword>
<keyword id="KW-0903">Direct protein sequencing</keyword>
<keyword id="KW-0295">Fungicide</keyword>